<comment type="function">
    <text evidence="1">Endonuclease that specifically degrades the RNA of RNA-DNA hybrids.</text>
</comment>
<comment type="catalytic activity">
    <reaction evidence="1">
        <text>Endonucleolytic cleavage to 5'-phosphomonoester.</text>
        <dbReference type="EC" id="3.1.26.4"/>
    </reaction>
</comment>
<comment type="cofactor">
    <cofactor evidence="1">
        <name>Mn(2+)</name>
        <dbReference type="ChEBI" id="CHEBI:29035"/>
    </cofactor>
    <cofactor evidence="1">
        <name>Mg(2+)</name>
        <dbReference type="ChEBI" id="CHEBI:18420"/>
    </cofactor>
    <text evidence="1">Manganese or magnesium. Binds 1 divalent metal ion per monomer in the absence of substrate. May bind a second metal ion after substrate binding.</text>
</comment>
<comment type="subcellular location">
    <subcellularLocation>
        <location evidence="1">Cytoplasm</location>
    </subcellularLocation>
</comment>
<comment type="similarity">
    <text evidence="1">Belongs to the RNase HII family.</text>
</comment>
<feature type="chain" id="PRO_0000235729" description="Ribonuclease HII">
    <location>
        <begin position="1"/>
        <end position="197"/>
    </location>
</feature>
<feature type="domain" description="RNase H type-2" evidence="2">
    <location>
        <begin position="9"/>
        <end position="197"/>
    </location>
</feature>
<feature type="binding site" evidence="1">
    <location>
        <position position="15"/>
    </location>
    <ligand>
        <name>a divalent metal cation</name>
        <dbReference type="ChEBI" id="CHEBI:60240"/>
    </ligand>
</feature>
<feature type="binding site" evidence="1">
    <location>
        <position position="16"/>
    </location>
    <ligand>
        <name>a divalent metal cation</name>
        <dbReference type="ChEBI" id="CHEBI:60240"/>
    </ligand>
</feature>
<feature type="binding site" evidence="1">
    <location>
        <position position="107"/>
    </location>
    <ligand>
        <name>a divalent metal cation</name>
        <dbReference type="ChEBI" id="CHEBI:60240"/>
    </ligand>
</feature>
<evidence type="ECO:0000255" key="1">
    <source>
        <dbReference type="HAMAP-Rule" id="MF_00052"/>
    </source>
</evidence>
<evidence type="ECO:0000255" key="2">
    <source>
        <dbReference type="PROSITE-ProRule" id="PRU01319"/>
    </source>
</evidence>
<protein>
    <recommendedName>
        <fullName evidence="1">Ribonuclease HII</fullName>
        <shortName evidence="1">RNase HII</shortName>
        <ecNumber evidence="1">3.1.26.4</ecNumber>
    </recommendedName>
</protein>
<proteinExistence type="inferred from homology"/>
<reference key="1">
    <citation type="journal article" date="2005" name="J. Bacteriol.">
        <title>Genomic sequence of an otitis media isolate of nontypeable Haemophilus influenzae: comparative study with H. influenzae serotype d, strain KW20.</title>
        <authorList>
            <person name="Harrison A."/>
            <person name="Dyer D.W."/>
            <person name="Gillaspy A."/>
            <person name="Ray W.C."/>
            <person name="Mungur R."/>
            <person name="Carson M.B."/>
            <person name="Zhong H."/>
            <person name="Gipson J."/>
            <person name="Gipson M."/>
            <person name="Johnson L.S."/>
            <person name="Lewis L."/>
            <person name="Bakaletz L.O."/>
            <person name="Munson R.S. Jr."/>
        </authorList>
    </citation>
    <scope>NUCLEOTIDE SEQUENCE [LARGE SCALE GENOMIC DNA]</scope>
    <source>
        <strain>86-028NP</strain>
    </source>
</reference>
<keyword id="KW-0963">Cytoplasm</keyword>
<keyword id="KW-0255">Endonuclease</keyword>
<keyword id="KW-0378">Hydrolase</keyword>
<keyword id="KW-0464">Manganese</keyword>
<keyword id="KW-0479">Metal-binding</keyword>
<keyword id="KW-0540">Nuclease</keyword>
<accession>Q4QLM7</accession>
<organism>
    <name type="scientific">Haemophilus influenzae (strain 86-028NP)</name>
    <dbReference type="NCBI Taxonomy" id="281310"/>
    <lineage>
        <taxon>Bacteria</taxon>
        <taxon>Pseudomonadati</taxon>
        <taxon>Pseudomonadota</taxon>
        <taxon>Gammaproteobacteria</taxon>
        <taxon>Pasteurellales</taxon>
        <taxon>Pasteurellaceae</taxon>
        <taxon>Haemophilus</taxon>
    </lineage>
</organism>
<gene>
    <name evidence="1" type="primary">rnhB</name>
    <name type="ordered locus">NTHI1219</name>
</gene>
<sequence length="197" mass="21557">MFEYPQGYELIAGVDEVGRGPLVGAVVTAAVILDPNNPIEGLADSKKLSEKKRLALAEEIKEKALAWALGRAEANEIDEINILQASLLAMTRAVKSLKIQPHFVLVDGNKIPKDLAIPAQAVVKGDNLVAEISAASILAKVARDQEMEELDKQYPEYAFAQHKGYPTKLHLEKLAELGALPQHRRSFAPVKKALEQF</sequence>
<dbReference type="EC" id="3.1.26.4" evidence="1"/>
<dbReference type="EMBL" id="CP000057">
    <property type="protein sequence ID" value="AAX88070.1"/>
    <property type="molecule type" value="Genomic_DNA"/>
</dbReference>
<dbReference type="RefSeq" id="WP_011272364.1">
    <property type="nucleotide sequence ID" value="NC_007146.2"/>
</dbReference>
<dbReference type="SMR" id="Q4QLM7"/>
<dbReference type="GeneID" id="93220071"/>
<dbReference type="KEGG" id="hit:NTHI1219"/>
<dbReference type="HOGENOM" id="CLU_036532_3_2_6"/>
<dbReference type="Proteomes" id="UP000002525">
    <property type="component" value="Chromosome"/>
</dbReference>
<dbReference type="GO" id="GO:0005737">
    <property type="term" value="C:cytoplasm"/>
    <property type="evidence" value="ECO:0007669"/>
    <property type="project" value="UniProtKB-SubCell"/>
</dbReference>
<dbReference type="GO" id="GO:0032299">
    <property type="term" value="C:ribonuclease H2 complex"/>
    <property type="evidence" value="ECO:0007669"/>
    <property type="project" value="TreeGrafter"/>
</dbReference>
<dbReference type="GO" id="GO:0030145">
    <property type="term" value="F:manganese ion binding"/>
    <property type="evidence" value="ECO:0007669"/>
    <property type="project" value="UniProtKB-UniRule"/>
</dbReference>
<dbReference type="GO" id="GO:0003723">
    <property type="term" value="F:RNA binding"/>
    <property type="evidence" value="ECO:0007669"/>
    <property type="project" value="InterPro"/>
</dbReference>
<dbReference type="GO" id="GO:0004523">
    <property type="term" value="F:RNA-DNA hybrid ribonuclease activity"/>
    <property type="evidence" value="ECO:0007669"/>
    <property type="project" value="UniProtKB-UniRule"/>
</dbReference>
<dbReference type="GO" id="GO:0043137">
    <property type="term" value="P:DNA replication, removal of RNA primer"/>
    <property type="evidence" value="ECO:0007669"/>
    <property type="project" value="TreeGrafter"/>
</dbReference>
<dbReference type="GO" id="GO:0006298">
    <property type="term" value="P:mismatch repair"/>
    <property type="evidence" value="ECO:0007669"/>
    <property type="project" value="TreeGrafter"/>
</dbReference>
<dbReference type="CDD" id="cd07182">
    <property type="entry name" value="RNase_HII_bacteria_HII_like"/>
    <property type="match status" value="1"/>
</dbReference>
<dbReference type="FunFam" id="3.30.420.10:FF:000006">
    <property type="entry name" value="Ribonuclease HII"/>
    <property type="match status" value="1"/>
</dbReference>
<dbReference type="Gene3D" id="3.30.420.10">
    <property type="entry name" value="Ribonuclease H-like superfamily/Ribonuclease H"/>
    <property type="match status" value="1"/>
</dbReference>
<dbReference type="HAMAP" id="MF_00052_B">
    <property type="entry name" value="RNase_HII_B"/>
    <property type="match status" value="1"/>
</dbReference>
<dbReference type="InterPro" id="IPR022898">
    <property type="entry name" value="RNase_HII"/>
</dbReference>
<dbReference type="InterPro" id="IPR001352">
    <property type="entry name" value="RNase_HII/HIII"/>
</dbReference>
<dbReference type="InterPro" id="IPR024567">
    <property type="entry name" value="RNase_HII/HIII_dom"/>
</dbReference>
<dbReference type="InterPro" id="IPR012337">
    <property type="entry name" value="RNaseH-like_sf"/>
</dbReference>
<dbReference type="InterPro" id="IPR036397">
    <property type="entry name" value="RNaseH_sf"/>
</dbReference>
<dbReference type="NCBIfam" id="NF000594">
    <property type="entry name" value="PRK00015.1-1"/>
    <property type="match status" value="1"/>
</dbReference>
<dbReference type="NCBIfam" id="NF000595">
    <property type="entry name" value="PRK00015.1-3"/>
    <property type="match status" value="1"/>
</dbReference>
<dbReference type="NCBIfam" id="NF000596">
    <property type="entry name" value="PRK00015.1-4"/>
    <property type="match status" value="1"/>
</dbReference>
<dbReference type="PANTHER" id="PTHR10954">
    <property type="entry name" value="RIBONUCLEASE H2 SUBUNIT A"/>
    <property type="match status" value="1"/>
</dbReference>
<dbReference type="PANTHER" id="PTHR10954:SF18">
    <property type="entry name" value="RIBONUCLEASE HII"/>
    <property type="match status" value="1"/>
</dbReference>
<dbReference type="Pfam" id="PF01351">
    <property type="entry name" value="RNase_HII"/>
    <property type="match status" value="1"/>
</dbReference>
<dbReference type="SUPFAM" id="SSF53098">
    <property type="entry name" value="Ribonuclease H-like"/>
    <property type="match status" value="1"/>
</dbReference>
<dbReference type="PROSITE" id="PS51975">
    <property type="entry name" value="RNASE_H_2"/>
    <property type="match status" value="1"/>
</dbReference>
<name>RNH2_HAEI8</name>